<organism>
    <name type="scientific">Listeria monocytogenes serotype 4b (strain F2365)</name>
    <dbReference type="NCBI Taxonomy" id="265669"/>
    <lineage>
        <taxon>Bacteria</taxon>
        <taxon>Bacillati</taxon>
        <taxon>Bacillota</taxon>
        <taxon>Bacilli</taxon>
        <taxon>Bacillales</taxon>
        <taxon>Listeriaceae</taxon>
        <taxon>Listeria</taxon>
    </lineage>
</organism>
<dbReference type="EC" id="1.3.1.98" evidence="1"/>
<dbReference type="EMBL" id="AE017262">
    <property type="protein sequence ID" value="AAT04214.1"/>
    <property type="molecule type" value="Genomic_DNA"/>
</dbReference>
<dbReference type="RefSeq" id="WP_003725365.1">
    <property type="nucleotide sequence ID" value="NC_002973.6"/>
</dbReference>
<dbReference type="SMR" id="Q71ZQ0"/>
<dbReference type="KEGG" id="lmf:LMOf2365_1439"/>
<dbReference type="HOGENOM" id="CLU_035304_1_1_9"/>
<dbReference type="UniPathway" id="UPA00219"/>
<dbReference type="GO" id="GO:0005829">
    <property type="term" value="C:cytosol"/>
    <property type="evidence" value="ECO:0007669"/>
    <property type="project" value="TreeGrafter"/>
</dbReference>
<dbReference type="GO" id="GO:0071949">
    <property type="term" value="F:FAD binding"/>
    <property type="evidence" value="ECO:0007669"/>
    <property type="project" value="InterPro"/>
</dbReference>
<dbReference type="GO" id="GO:0008762">
    <property type="term" value="F:UDP-N-acetylmuramate dehydrogenase activity"/>
    <property type="evidence" value="ECO:0007669"/>
    <property type="project" value="UniProtKB-UniRule"/>
</dbReference>
<dbReference type="GO" id="GO:0051301">
    <property type="term" value="P:cell division"/>
    <property type="evidence" value="ECO:0007669"/>
    <property type="project" value="UniProtKB-KW"/>
</dbReference>
<dbReference type="GO" id="GO:0071555">
    <property type="term" value="P:cell wall organization"/>
    <property type="evidence" value="ECO:0007669"/>
    <property type="project" value="UniProtKB-KW"/>
</dbReference>
<dbReference type="GO" id="GO:0009252">
    <property type="term" value="P:peptidoglycan biosynthetic process"/>
    <property type="evidence" value="ECO:0007669"/>
    <property type="project" value="UniProtKB-UniRule"/>
</dbReference>
<dbReference type="GO" id="GO:0008360">
    <property type="term" value="P:regulation of cell shape"/>
    <property type="evidence" value="ECO:0007669"/>
    <property type="project" value="UniProtKB-KW"/>
</dbReference>
<dbReference type="FunFam" id="3.90.78.10:FF:000001">
    <property type="entry name" value="UDP-N-acetylenolpyruvoylglucosamine reductase"/>
    <property type="match status" value="1"/>
</dbReference>
<dbReference type="Gene3D" id="3.30.465.10">
    <property type="match status" value="1"/>
</dbReference>
<dbReference type="Gene3D" id="3.90.78.10">
    <property type="entry name" value="UDP-N-acetylenolpyruvoylglucosamine reductase, C-terminal domain"/>
    <property type="match status" value="1"/>
</dbReference>
<dbReference type="Gene3D" id="3.30.43.10">
    <property type="entry name" value="Uridine Diphospho-n-acetylenolpyruvylglucosamine Reductase, domain 2"/>
    <property type="match status" value="1"/>
</dbReference>
<dbReference type="HAMAP" id="MF_00037">
    <property type="entry name" value="MurB"/>
    <property type="match status" value="1"/>
</dbReference>
<dbReference type="InterPro" id="IPR016166">
    <property type="entry name" value="FAD-bd_PCMH"/>
</dbReference>
<dbReference type="InterPro" id="IPR036318">
    <property type="entry name" value="FAD-bd_PCMH-like_sf"/>
</dbReference>
<dbReference type="InterPro" id="IPR016167">
    <property type="entry name" value="FAD-bd_PCMH_sub1"/>
</dbReference>
<dbReference type="InterPro" id="IPR016169">
    <property type="entry name" value="FAD-bd_PCMH_sub2"/>
</dbReference>
<dbReference type="InterPro" id="IPR003170">
    <property type="entry name" value="MurB"/>
</dbReference>
<dbReference type="InterPro" id="IPR011601">
    <property type="entry name" value="MurB_C"/>
</dbReference>
<dbReference type="InterPro" id="IPR036635">
    <property type="entry name" value="MurB_C_sf"/>
</dbReference>
<dbReference type="InterPro" id="IPR006094">
    <property type="entry name" value="Oxid_FAD_bind_N"/>
</dbReference>
<dbReference type="NCBIfam" id="TIGR00179">
    <property type="entry name" value="murB"/>
    <property type="match status" value="1"/>
</dbReference>
<dbReference type="NCBIfam" id="NF010480">
    <property type="entry name" value="PRK13905.1"/>
    <property type="match status" value="1"/>
</dbReference>
<dbReference type="PANTHER" id="PTHR21071">
    <property type="entry name" value="UDP-N-ACETYLENOLPYRUVOYLGLUCOSAMINE REDUCTASE"/>
    <property type="match status" value="1"/>
</dbReference>
<dbReference type="PANTHER" id="PTHR21071:SF4">
    <property type="entry name" value="UDP-N-ACETYLENOLPYRUVOYLGLUCOSAMINE REDUCTASE"/>
    <property type="match status" value="1"/>
</dbReference>
<dbReference type="Pfam" id="PF01565">
    <property type="entry name" value="FAD_binding_4"/>
    <property type="match status" value="1"/>
</dbReference>
<dbReference type="Pfam" id="PF02873">
    <property type="entry name" value="MurB_C"/>
    <property type="match status" value="1"/>
</dbReference>
<dbReference type="SUPFAM" id="SSF56176">
    <property type="entry name" value="FAD-binding/transporter-associated domain-like"/>
    <property type="match status" value="1"/>
</dbReference>
<dbReference type="SUPFAM" id="SSF56194">
    <property type="entry name" value="Uridine diphospho-N-Acetylenolpyruvylglucosamine reductase, MurB, C-terminal domain"/>
    <property type="match status" value="1"/>
</dbReference>
<dbReference type="PROSITE" id="PS51387">
    <property type="entry name" value="FAD_PCMH"/>
    <property type="match status" value="1"/>
</dbReference>
<keyword id="KW-0131">Cell cycle</keyword>
<keyword id="KW-0132">Cell division</keyword>
<keyword id="KW-0133">Cell shape</keyword>
<keyword id="KW-0961">Cell wall biogenesis/degradation</keyword>
<keyword id="KW-0963">Cytoplasm</keyword>
<keyword id="KW-0274">FAD</keyword>
<keyword id="KW-0285">Flavoprotein</keyword>
<keyword id="KW-0521">NADP</keyword>
<keyword id="KW-0560">Oxidoreductase</keyword>
<keyword id="KW-0573">Peptidoglycan synthesis</keyword>
<gene>
    <name evidence="1" type="primary">murB</name>
    <name type="ordered locus">LMOf2365_1439</name>
</gene>
<reference key="1">
    <citation type="journal article" date="2004" name="Nucleic Acids Res.">
        <title>Whole genome comparisons of serotype 4b and 1/2a strains of the food-borne pathogen Listeria monocytogenes reveal new insights into the core genome components of this species.</title>
        <authorList>
            <person name="Nelson K.E."/>
            <person name="Fouts D.E."/>
            <person name="Mongodin E.F."/>
            <person name="Ravel J."/>
            <person name="DeBoy R.T."/>
            <person name="Kolonay J.F."/>
            <person name="Rasko D.A."/>
            <person name="Angiuoli S.V."/>
            <person name="Gill S.R."/>
            <person name="Paulsen I.T."/>
            <person name="Peterson J.D."/>
            <person name="White O."/>
            <person name="Nelson W.C."/>
            <person name="Nierman W.C."/>
            <person name="Beanan M.J."/>
            <person name="Brinkac L.M."/>
            <person name="Daugherty S.C."/>
            <person name="Dodson R.J."/>
            <person name="Durkin A.S."/>
            <person name="Madupu R."/>
            <person name="Haft D.H."/>
            <person name="Selengut J."/>
            <person name="Van Aken S.E."/>
            <person name="Khouri H.M."/>
            <person name="Fedorova N."/>
            <person name="Forberger H.A."/>
            <person name="Tran B."/>
            <person name="Kathariou S."/>
            <person name="Wonderling L.D."/>
            <person name="Uhlich G.A."/>
            <person name="Bayles D.O."/>
            <person name="Luchansky J.B."/>
            <person name="Fraser C.M."/>
        </authorList>
    </citation>
    <scope>NUCLEOTIDE SEQUENCE [LARGE SCALE GENOMIC DNA]</scope>
    <source>
        <strain>F2365</strain>
    </source>
</reference>
<sequence>MNNLQTQFPHIAIKLNEPLSKYTYTKTGGAADVFVMPKTIEETQEVVAYCHQNKIPLTILGNGSNLIIKDGGIRGVILHLDLLQTIERNNTQIIAMSGAKLIDTAKFALDESLSGLEFACGIPGSIGGALHMNAGAYGGEISDVLEAATVLTQTGELKKLKRSELKAAYRFSTIAEKNYIVLDATFSLALEEKNLIQAKMDELTAAREAKQPLEYPSCGSVFKRPPGHFAGKLIQDSGLQGHIIGGAQVSLKHAGFIVNIGGATATDYMNLIAYVQQTVREKFDVELETEVKIIGEDK</sequence>
<accession>Q71ZQ0</accession>
<proteinExistence type="inferred from homology"/>
<evidence type="ECO:0000255" key="1">
    <source>
        <dbReference type="HAMAP-Rule" id="MF_00037"/>
    </source>
</evidence>
<protein>
    <recommendedName>
        <fullName evidence="1">UDP-N-acetylenolpyruvoylglucosamine reductase</fullName>
        <ecNumber evidence="1">1.3.1.98</ecNumber>
    </recommendedName>
    <alternativeName>
        <fullName evidence="1">UDP-N-acetylmuramate dehydrogenase</fullName>
    </alternativeName>
</protein>
<feature type="chain" id="PRO_0000179226" description="UDP-N-acetylenolpyruvoylglucosamine reductase">
    <location>
        <begin position="1"/>
        <end position="298"/>
    </location>
</feature>
<feature type="domain" description="FAD-binding PCMH-type" evidence="1">
    <location>
        <begin position="26"/>
        <end position="191"/>
    </location>
</feature>
<feature type="active site" evidence="1">
    <location>
        <position position="170"/>
    </location>
</feature>
<feature type="active site" description="Proton donor" evidence="1">
    <location>
        <position position="220"/>
    </location>
</feature>
<feature type="active site" evidence="1">
    <location>
        <position position="290"/>
    </location>
</feature>
<name>MURB_LISMF</name>
<comment type="function">
    <text evidence="1">Cell wall formation.</text>
</comment>
<comment type="catalytic activity">
    <reaction evidence="1">
        <text>UDP-N-acetyl-alpha-D-muramate + NADP(+) = UDP-N-acetyl-3-O-(1-carboxyvinyl)-alpha-D-glucosamine + NADPH + H(+)</text>
        <dbReference type="Rhea" id="RHEA:12248"/>
        <dbReference type="ChEBI" id="CHEBI:15378"/>
        <dbReference type="ChEBI" id="CHEBI:57783"/>
        <dbReference type="ChEBI" id="CHEBI:58349"/>
        <dbReference type="ChEBI" id="CHEBI:68483"/>
        <dbReference type="ChEBI" id="CHEBI:70757"/>
        <dbReference type="EC" id="1.3.1.98"/>
    </reaction>
</comment>
<comment type="cofactor">
    <cofactor evidence="1">
        <name>FAD</name>
        <dbReference type="ChEBI" id="CHEBI:57692"/>
    </cofactor>
</comment>
<comment type="pathway">
    <text evidence="1">Cell wall biogenesis; peptidoglycan biosynthesis.</text>
</comment>
<comment type="subcellular location">
    <subcellularLocation>
        <location evidence="1">Cytoplasm</location>
    </subcellularLocation>
</comment>
<comment type="similarity">
    <text evidence="1">Belongs to the MurB family.</text>
</comment>